<reference key="1">
    <citation type="journal article" date="2006" name="Proc. Natl. Acad. Sci. U.S.A.">
        <title>Identification of genes subject to positive selection in uropathogenic strains of Escherichia coli: a comparative genomics approach.</title>
        <authorList>
            <person name="Chen S.L."/>
            <person name="Hung C.-S."/>
            <person name="Xu J."/>
            <person name="Reigstad C.S."/>
            <person name="Magrini V."/>
            <person name="Sabo A."/>
            <person name="Blasiar D."/>
            <person name="Bieri T."/>
            <person name="Meyer R.R."/>
            <person name="Ozersky P."/>
            <person name="Armstrong J.R."/>
            <person name="Fulton R.S."/>
            <person name="Latreille J.P."/>
            <person name="Spieth J."/>
            <person name="Hooton T.M."/>
            <person name="Mardis E.R."/>
            <person name="Hultgren S.J."/>
            <person name="Gordon J.I."/>
        </authorList>
    </citation>
    <scope>NUCLEOTIDE SEQUENCE [LARGE SCALE GENOMIC DNA]</scope>
    <source>
        <strain>UTI89 / UPEC</strain>
    </source>
</reference>
<feature type="chain" id="PRO_1000061865" description="UPF0250 protein YbeD">
    <location>
        <begin position="1"/>
        <end position="87"/>
    </location>
</feature>
<accession>Q1RET1</accession>
<sequence>MKTKLNELLEFPTPFTYKVMGQALPELVDQVVEVVQRHAPGDYTPTVKPSSKGNYHSVSITINATHIEQVETLYEELGKIDIVRMVL</sequence>
<name>YBED_ECOUT</name>
<evidence type="ECO:0000255" key="1">
    <source>
        <dbReference type="HAMAP-Rule" id="MF_00659"/>
    </source>
</evidence>
<protein>
    <recommendedName>
        <fullName evidence="1">UPF0250 protein YbeD</fullName>
    </recommendedName>
</protein>
<dbReference type="EMBL" id="CP000243">
    <property type="protein sequence ID" value="ABE06133.1"/>
    <property type="molecule type" value="Genomic_DNA"/>
</dbReference>
<dbReference type="RefSeq" id="WP_000850550.1">
    <property type="nucleotide sequence ID" value="NZ_CP064825.1"/>
</dbReference>
<dbReference type="SMR" id="Q1RET1"/>
<dbReference type="GeneID" id="93776851"/>
<dbReference type="KEGG" id="eci:UTI89_C0633"/>
<dbReference type="HOGENOM" id="CLU_161438_2_1_6"/>
<dbReference type="Proteomes" id="UP000001952">
    <property type="component" value="Chromosome"/>
</dbReference>
<dbReference type="GO" id="GO:0005829">
    <property type="term" value="C:cytosol"/>
    <property type="evidence" value="ECO:0007669"/>
    <property type="project" value="TreeGrafter"/>
</dbReference>
<dbReference type="FunFam" id="3.30.70.260:FF:000002">
    <property type="entry name" value="UPF0250 protein YbeD"/>
    <property type="match status" value="1"/>
</dbReference>
<dbReference type="Gene3D" id="3.30.70.260">
    <property type="match status" value="1"/>
</dbReference>
<dbReference type="HAMAP" id="MF_00659">
    <property type="entry name" value="UPF0250"/>
    <property type="match status" value="1"/>
</dbReference>
<dbReference type="InterPro" id="IPR007454">
    <property type="entry name" value="UPF0250_YbeD-like"/>
</dbReference>
<dbReference type="InterPro" id="IPR027471">
    <property type="entry name" value="YbeD-like_sf"/>
</dbReference>
<dbReference type="NCBIfam" id="NF003447">
    <property type="entry name" value="PRK04998.1"/>
    <property type="match status" value="1"/>
</dbReference>
<dbReference type="PANTHER" id="PTHR38036">
    <property type="entry name" value="UPF0250 PROTEIN YBED"/>
    <property type="match status" value="1"/>
</dbReference>
<dbReference type="PANTHER" id="PTHR38036:SF1">
    <property type="entry name" value="UPF0250 PROTEIN YBED"/>
    <property type="match status" value="1"/>
</dbReference>
<dbReference type="Pfam" id="PF04359">
    <property type="entry name" value="DUF493"/>
    <property type="match status" value="1"/>
</dbReference>
<dbReference type="SUPFAM" id="SSF117991">
    <property type="entry name" value="YbeD/HP0495-like"/>
    <property type="match status" value="1"/>
</dbReference>
<comment type="similarity">
    <text evidence="1">Belongs to the UPF0250 family.</text>
</comment>
<proteinExistence type="inferred from homology"/>
<organism>
    <name type="scientific">Escherichia coli (strain UTI89 / UPEC)</name>
    <dbReference type="NCBI Taxonomy" id="364106"/>
    <lineage>
        <taxon>Bacteria</taxon>
        <taxon>Pseudomonadati</taxon>
        <taxon>Pseudomonadota</taxon>
        <taxon>Gammaproteobacteria</taxon>
        <taxon>Enterobacterales</taxon>
        <taxon>Enterobacteriaceae</taxon>
        <taxon>Escherichia</taxon>
    </lineage>
</organism>
<gene>
    <name evidence="1" type="primary">ybeD</name>
    <name type="ordered locus">UTI89_C0633</name>
</gene>